<comment type="function">
    <text evidence="1">F(1)F(0) ATP synthase produces ATP from ADP in the presence of a proton or sodium gradient. F-type ATPases consist of two structural domains, F(1) containing the extramembraneous catalytic core and F(0) containing the membrane proton channel, linked together by a central stalk and a peripheral stalk. During catalysis, ATP synthesis in the catalytic domain of F(1) is coupled via a rotary mechanism of the central stalk subunits to proton translocation.</text>
</comment>
<comment type="function">
    <text evidence="1">Component of the F(0) channel, it forms part of the peripheral stalk, linking F(1) to F(0).</text>
</comment>
<comment type="subunit">
    <text evidence="1">F-type ATPases have 2 components, F(1) - the catalytic core - and F(0) - the membrane proton channel. F(1) has five subunits: alpha(3), beta(3), gamma(1), delta(1), epsilon(1). F(0) has three main subunits: a(1), b(2) and c(10-14). The alpha and beta chains form an alternating ring which encloses part of the gamma chain. F(1) is attached to F(0) by a central stalk formed by the gamma and epsilon chains, while a peripheral stalk is formed by the delta and b chains.</text>
</comment>
<comment type="subcellular location">
    <subcellularLocation>
        <location evidence="1">Cell membrane</location>
        <topology evidence="1">Single-pass membrane protein</topology>
    </subcellularLocation>
</comment>
<comment type="similarity">
    <text evidence="1">Belongs to the ATPase B chain family.</text>
</comment>
<reference key="1">
    <citation type="journal article" date="2004" name="Nucleic Acids Res.">
        <title>The genome sequence of Bacillus cereus ATCC 10987 reveals metabolic adaptations and a large plasmid related to Bacillus anthracis pXO1.</title>
        <authorList>
            <person name="Rasko D.A."/>
            <person name="Ravel J."/>
            <person name="Oekstad O.A."/>
            <person name="Helgason E."/>
            <person name="Cer R.Z."/>
            <person name="Jiang L."/>
            <person name="Shores K.A."/>
            <person name="Fouts D.E."/>
            <person name="Tourasse N.J."/>
            <person name="Angiuoli S.V."/>
            <person name="Kolonay J.F."/>
            <person name="Nelson W.C."/>
            <person name="Kolstoe A.-B."/>
            <person name="Fraser C.M."/>
            <person name="Read T.D."/>
        </authorList>
    </citation>
    <scope>NUCLEOTIDE SEQUENCE [LARGE SCALE GENOMIC DNA]</scope>
    <source>
        <strain>ATCC 10987 / NRS 248</strain>
    </source>
</reference>
<organism>
    <name type="scientific">Bacillus cereus (strain ATCC 10987 / NRS 248)</name>
    <dbReference type="NCBI Taxonomy" id="222523"/>
    <lineage>
        <taxon>Bacteria</taxon>
        <taxon>Bacillati</taxon>
        <taxon>Bacillota</taxon>
        <taxon>Bacilli</taxon>
        <taxon>Bacillales</taxon>
        <taxon>Bacillaceae</taxon>
        <taxon>Bacillus</taxon>
        <taxon>Bacillus cereus group</taxon>
    </lineage>
</organism>
<sequence length="168" mass="18932">MPTLLLGAAIPFGTIAYTLFIFLLLLVMLRKFAWGPLMGIMKEREEHVTNEIDAAERSNAEAKKLVEEQREMLKQSRVEAQELIERAKKQAVDQKDAIVAAAKEEAESIKASAVQEIQREKEQAIAALQEQVASLSVQIASKVIEKELKEEDQVKLIRDYIKEVGEAR</sequence>
<dbReference type="EMBL" id="AE017194">
    <property type="protein sequence ID" value="AAS44334.1"/>
    <property type="molecule type" value="Genomic_DNA"/>
</dbReference>
<dbReference type="SMR" id="Q72XE4"/>
<dbReference type="KEGG" id="bca:BCE_5434"/>
<dbReference type="HOGENOM" id="CLU_079215_4_2_9"/>
<dbReference type="Proteomes" id="UP000002527">
    <property type="component" value="Chromosome"/>
</dbReference>
<dbReference type="GO" id="GO:0005886">
    <property type="term" value="C:plasma membrane"/>
    <property type="evidence" value="ECO:0007669"/>
    <property type="project" value="UniProtKB-SubCell"/>
</dbReference>
<dbReference type="GO" id="GO:0045259">
    <property type="term" value="C:proton-transporting ATP synthase complex"/>
    <property type="evidence" value="ECO:0007669"/>
    <property type="project" value="UniProtKB-KW"/>
</dbReference>
<dbReference type="GO" id="GO:0046933">
    <property type="term" value="F:proton-transporting ATP synthase activity, rotational mechanism"/>
    <property type="evidence" value="ECO:0007669"/>
    <property type="project" value="UniProtKB-UniRule"/>
</dbReference>
<dbReference type="GO" id="GO:0046961">
    <property type="term" value="F:proton-transporting ATPase activity, rotational mechanism"/>
    <property type="evidence" value="ECO:0007669"/>
    <property type="project" value="TreeGrafter"/>
</dbReference>
<dbReference type="CDD" id="cd06503">
    <property type="entry name" value="ATP-synt_Fo_b"/>
    <property type="match status" value="1"/>
</dbReference>
<dbReference type="Gene3D" id="6.10.250.1580">
    <property type="match status" value="1"/>
</dbReference>
<dbReference type="HAMAP" id="MF_01398">
    <property type="entry name" value="ATP_synth_b_bprime"/>
    <property type="match status" value="1"/>
</dbReference>
<dbReference type="InterPro" id="IPR028987">
    <property type="entry name" value="ATP_synth_B-like_membr_sf"/>
</dbReference>
<dbReference type="InterPro" id="IPR002146">
    <property type="entry name" value="ATP_synth_b/b'su_bac/chlpt"/>
</dbReference>
<dbReference type="InterPro" id="IPR005864">
    <property type="entry name" value="ATP_synth_F0_bsu_bac"/>
</dbReference>
<dbReference type="InterPro" id="IPR050059">
    <property type="entry name" value="ATP_synthase_B_chain"/>
</dbReference>
<dbReference type="NCBIfam" id="TIGR01144">
    <property type="entry name" value="ATP_synt_b"/>
    <property type="match status" value="1"/>
</dbReference>
<dbReference type="PANTHER" id="PTHR33445:SF1">
    <property type="entry name" value="ATP SYNTHASE SUBUNIT B"/>
    <property type="match status" value="1"/>
</dbReference>
<dbReference type="PANTHER" id="PTHR33445">
    <property type="entry name" value="ATP SYNTHASE SUBUNIT B', CHLOROPLASTIC"/>
    <property type="match status" value="1"/>
</dbReference>
<dbReference type="Pfam" id="PF00430">
    <property type="entry name" value="ATP-synt_B"/>
    <property type="match status" value="1"/>
</dbReference>
<dbReference type="SUPFAM" id="SSF81573">
    <property type="entry name" value="F1F0 ATP synthase subunit B, membrane domain"/>
    <property type="match status" value="1"/>
</dbReference>
<protein>
    <recommendedName>
        <fullName evidence="1">ATP synthase subunit b</fullName>
    </recommendedName>
    <alternativeName>
        <fullName evidence="1">ATP synthase F(0) sector subunit b</fullName>
    </alternativeName>
    <alternativeName>
        <fullName evidence="1">ATPase subunit I</fullName>
    </alternativeName>
    <alternativeName>
        <fullName evidence="1">F-type ATPase subunit b</fullName>
        <shortName evidence="1">F-ATPase subunit b</shortName>
    </alternativeName>
</protein>
<feature type="chain" id="PRO_0000368325" description="ATP synthase subunit b">
    <location>
        <begin position="1"/>
        <end position="168"/>
    </location>
</feature>
<feature type="transmembrane region" description="Helical" evidence="1">
    <location>
        <begin position="9"/>
        <end position="29"/>
    </location>
</feature>
<accession>Q72XE4</accession>
<name>ATPF_BACC1</name>
<gene>
    <name evidence="1" type="primary">atpF</name>
    <name type="ordered locus">BCE_5434</name>
</gene>
<keyword id="KW-0066">ATP synthesis</keyword>
<keyword id="KW-1003">Cell membrane</keyword>
<keyword id="KW-0138">CF(0)</keyword>
<keyword id="KW-0375">Hydrogen ion transport</keyword>
<keyword id="KW-0406">Ion transport</keyword>
<keyword id="KW-0472">Membrane</keyword>
<keyword id="KW-0812">Transmembrane</keyword>
<keyword id="KW-1133">Transmembrane helix</keyword>
<keyword id="KW-0813">Transport</keyword>
<proteinExistence type="inferred from homology"/>
<evidence type="ECO:0000255" key="1">
    <source>
        <dbReference type="HAMAP-Rule" id="MF_01398"/>
    </source>
</evidence>